<protein>
    <recommendedName>
        <fullName evidence="8">Large ribosomal subunit protein uL22</fullName>
    </recommendedName>
    <alternativeName>
        <fullName>60S ribosomal protein L17</fullName>
    </alternativeName>
    <alternativeName>
        <fullName>60S ribosomal protein L23</fullName>
    </alternativeName>
    <alternativeName>
        <fullName>PD-1</fullName>
    </alternativeName>
</protein>
<reference key="1">
    <citation type="journal article" date="1990" name="Nucleic Acids Res.">
        <title>A human gene related to the ribosomal protein L23 gene of Halobacterium marismortui.</title>
        <authorList>
            <person name="Mager D.L."/>
            <person name="Freeman J.D."/>
        </authorList>
    </citation>
    <scope>NUCLEOTIDE SEQUENCE [MRNA] (ISOFORM 1)</scope>
    <source>
        <tissue>Blood</tissue>
    </source>
</reference>
<reference key="2">
    <citation type="journal article" date="1991" name="Cell Growth Differ.">
        <title>Isolation and characterization of a complementary DNA (PD-1) differentially expressed by human pancreatic ductal cell tumors.</title>
        <authorList>
            <person name="Batra S.K."/>
            <person name="Metzgar R.S."/>
            <person name="Hollingsworth M.A."/>
        </authorList>
    </citation>
    <scope>NUCLEOTIDE SEQUENCE [MRNA] (ISOFORM 1)</scope>
    <scope>TISSUE SPECIFICITY</scope>
    <source>
        <tissue>Pancreatic tumor</tissue>
    </source>
</reference>
<reference key="3">
    <citation type="journal article" date="2002" name="Genome Res.">
        <title>The human ribosomal protein genes: sequencing and comparative analysis of 73 genes.</title>
        <authorList>
            <person name="Yoshihama M."/>
            <person name="Uechi T."/>
            <person name="Asakawa S."/>
            <person name="Kawasaki K."/>
            <person name="Kato S."/>
            <person name="Higa S."/>
            <person name="Maeda N."/>
            <person name="Minoshima S."/>
            <person name="Tanaka T."/>
            <person name="Shimizu N."/>
            <person name="Kenmochi N."/>
        </authorList>
    </citation>
    <scope>NUCLEOTIDE SEQUENCE [GENOMIC DNA]</scope>
</reference>
<reference key="4">
    <citation type="journal article" date="2004" name="Nat. Genet.">
        <title>Complete sequencing and characterization of 21,243 full-length human cDNAs.</title>
        <authorList>
            <person name="Ota T."/>
            <person name="Suzuki Y."/>
            <person name="Nishikawa T."/>
            <person name="Otsuki T."/>
            <person name="Sugiyama T."/>
            <person name="Irie R."/>
            <person name="Wakamatsu A."/>
            <person name="Hayashi K."/>
            <person name="Sato H."/>
            <person name="Nagai K."/>
            <person name="Kimura K."/>
            <person name="Makita H."/>
            <person name="Sekine M."/>
            <person name="Obayashi M."/>
            <person name="Nishi T."/>
            <person name="Shibahara T."/>
            <person name="Tanaka T."/>
            <person name="Ishii S."/>
            <person name="Yamamoto J."/>
            <person name="Saito K."/>
            <person name="Kawai Y."/>
            <person name="Isono Y."/>
            <person name="Nakamura Y."/>
            <person name="Nagahari K."/>
            <person name="Murakami K."/>
            <person name="Yasuda T."/>
            <person name="Iwayanagi T."/>
            <person name="Wagatsuma M."/>
            <person name="Shiratori A."/>
            <person name="Sudo H."/>
            <person name="Hosoiri T."/>
            <person name="Kaku Y."/>
            <person name="Kodaira H."/>
            <person name="Kondo H."/>
            <person name="Sugawara M."/>
            <person name="Takahashi M."/>
            <person name="Kanda K."/>
            <person name="Yokoi T."/>
            <person name="Furuya T."/>
            <person name="Kikkawa E."/>
            <person name="Omura Y."/>
            <person name="Abe K."/>
            <person name="Kamihara K."/>
            <person name="Katsuta N."/>
            <person name="Sato K."/>
            <person name="Tanikawa M."/>
            <person name="Yamazaki M."/>
            <person name="Ninomiya K."/>
            <person name="Ishibashi T."/>
            <person name="Yamashita H."/>
            <person name="Murakawa K."/>
            <person name="Fujimori K."/>
            <person name="Tanai H."/>
            <person name="Kimata M."/>
            <person name="Watanabe M."/>
            <person name="Hiraoka S."/>
            <person name="Chiba Y."/>
            <person name="Ishida S."/>
            <person name="Ono Y."/>
            <person name="Takiguchi S."/>
            <person name="Watanabe S."/>
            <person name="Yosida M."/>
            <person name="Hotuta T."/>
            <person name="Kusano J."/>
            <person name="Kanehori K."/>
            <person name="Takahashi-Fujii A."/>
            <person name="Hara H."/>
            <person name="Tanase T.-O."/>
            <person name="Nomura Y."/>
            <person name="Togiya S."/>
            <person name="Komai F."/>
            <person name="Hara R."/>
            <person name="Takeuchi K."/>
            <person name="Arita M."/>
            <person name="Imose N."/>
            <person name="Musashino K."/>
            <person name="Yuuki H."/>
            <person name="Oshima A."/>
            <person name="Sasaki N."/>
            <person name="Aotsuka S."/>
            <person name="Yoshikawa Y."/>
            <person name="Matsunawa H."/>
            <person name="Ichihara T."/>
            <person name="Shiohata N."/>
            <person name="Sano S."/>
            <person name="Moriya S."/>
            <person name="Momiyama H."/>
            <person name="Satoh N."/>
            <person name="Takami S."/>
            <person name="Terashima Y."/>
            <person name="Suzuki O."/>
            <person name="Nakagawa S."/>
            <person name="Senoh A."/>
            <person name="Mizoguchi H."/>
            <person name="Goto Y."/>
            <person name="Shimizu F."/>
            <person name="Wakebe H."/>
            <person name="Hishigaki H."/>
            <person name="Watanabe T."/>
            <person name="Sugiyama A."/>
            <person name="Takemoto M."/>
            <person name="Kawakami B."/>
            <person name="Yamazaki M."/>
            <person name="Watanabe K."/>
            <person name="Kumagai A."/>
            <person name="Itakura S."/>
            <person name="Fukuzumi Y."/>
            <person name="Fujimori Y."/>
            <person name="Komiyama M."/>
            <person name="Tashiro H."/>
            <person name="Tanigami A."/>
            <person name="Fujiwara T."/>
            <person name="Ono T."/>
            <person name="Yamada K."/>
            <person name="Fujii Y."/>
            <person name="Ozaki K."/>
            <person name="Hirao M."/>
            <person name="Ohmori Y."/>
            <person name="Kawabata A."/>
            <person name="Hikiji T."/>
            <person name="Kobatake N."/>
            <person name="Inagaki H."/>
            <person name="Ikema Y."/>
            <person name="Okamoto S."/>
            <person name="Okitani R."/>
            <person name="Kawakami T."/>
            <person name="Noguchi S."/>
            <person name="Itoh T."/>
            <person name="Shigeta K."/>
            <person name="Senba T."/>
            <person name="Matsumura K."/>
            <person name="Nakajima Y."/>
            <person name="Mizuno T."/>
            <person name="Morinaga M."/>
            <person name="Sasaki M."/>
            <person name="Togashi T."/>
            <person name="Oyama M."/>
            <person name="Hata H."/>
            <person name="Watanabe M."/>
            <person name="Komatsu T."/>
            <person name="Mizushima-Sugano J."/>
            <person name="Satoh T."/>
            <person name="Shirai Y."/>
            <person name="Takahashi Y."/>
            <person name="Nakagawa K."/>
            <person name="Okumura K."/>
            <person name="Nagase T."/>
            <person name="Nomura N."/>
            <person name="Kikuchi H."/>
            <person name="Masuho Y."/>
            <person name="Yamashita R."/>
            <person name="Nakai K."/>
            <person name="Yada T."/>
            <person name="Nakamura Y."/>
            <person name="Ohara O."/>
            <person name="Isogai T."/>
            <person name="Sugano S."/>
        </authorList>
    </citation>
    <scope>NUCLEOTIDE SEQUENCE [LARGE SCALE MRNA] (ISOFORMS 1 AND 2)</scope>
    <source>
        <tissue>Uterus</tissue>
    </source>
</reference>
<reference key="5">
    <citation type="submission" date="2004-03" db="EMBL/GenBank/DDBJ databases">
        <authorList>
            <person name="Li W.B."/>
            <person name="Gruber C."/>
            <person name="Jessee J."/>
            <person name="Polayes D."/>
        </authorList>
    </citation>
    <scope>NUCLEOTIDE SEQUENCE [LARGE SCALE MRNA] (ISOFORM 3)</scope>
    <source>
        <tissue>Neuroblastoma</tissue>
    </source>
</reference>
<reference key="6">
    <citation type="journal article" date="2005" name="Nature">
        <title>DNA sequence and analysis of human chromosome 18.</title>
        <authorList>
            <person name="Nusbaum C."/>
            <person name="Zody M.C."/>
            <person name="Borowsky M.L."/>
            <person name="Kamal M."/>
            <person name="Kodira C.D."/>
            <person name="Taylor T.D."/>
            <person name="Whittaker C.A."/>
            <person name="Chang J.L."/>
            <person name="Cuomo C.A."/>
            <person name="Dewar K."/>
            <person name="FitzGerald M.G."/>
            <person name="Yang X."/>
            <person name="Abouelleil A."/>
            <person name="Allen N.R."/>
            <person name="Anderson S."/>
            <person name="Bloom T."/>
            <person name="Bugalter B."/>
            <person name="Butler J."/>
            <person name="Cook A."/>
            <person name="DeCaprio D."/>
            <person name="Engels R."/>
            <person name="Garber M."/>
            <person name="Gnirke A."/>
            <person name="Hafez N."/>
            <person name="Hall J.L."/>
            <person name="Norman C.H."/>
            <person name="Itoh T."/>
            <person name="Jaffe D.B."/>
            <person name="Kuroki Y."/>
            <person name="Lehoczky J."/>
            <person name="Lui A."/>
            <person name="Macdonald P."/>
            <person name="Mauceli E."/>
            <person name="Mikkelsen T.S."/>
            <person name="Naylor J.W."/>
            <person name="Nicol R."/>
            <person name="Nguyen C."/>
            <person name="Noguchi H."/>
            <person name="O'Leary S.B."/>
            <person name="Piqani B."/>
            <person name="Smith C.L."/>
            <person name="Talamas J.A."/>
            <person name="Topham K."/>
            <person name="Totoki Y."/>
            <person name="Toyoda A."/>
            <person name="Wain H.M."/>
            <person name="Young S.K."/>
            <person name="Zeng Q."/>
            <person name="Zimmer A.R."/>
            <person name="Fujiyama A."/>
            <person name="Hattori M."/>
            <person name="Birren B.W."/>
            <person name="Sakaki Y."/>
            <person name="Lander E.S."/>
        </authorList>
    </citation>
    <scope>NUCLEOTIDE SEQUENCE [LARGE SCALE GENOMIC DNA]</scope>
</reference>
<reference key="7">
    <citation type="submission" date="2005-07" db="EMBL/GenBank/DDBJ databases">
        <authorList>
            <person name="Mural R.J."/>
            <person name="Istrail S."/>
            <person name="Sutton G.G."/>
            <person name="Florea L."/>
            <person name="Halpern A.L."/>
            <person name="Mobarry C.M."/>
            <person name="Lippert R."/>
            <person name="Walenz B."/>
            <person name="Shatkay H."/>
            <person name="Dew I."/>
            <person name="Miller J.R."/>
            <person name="Flanigan M.J."/>
            <person name="Edwards N.J."/>
            <person name="Bolanos R."/>
            <person name="Fasulo D."/>
            <person name="Halldorsson B.V."/>
            <person name="Hannenhalli S."/>
            <person name="Turner R."/>
            <person name="Yooseph S."/>
            <person name="Lu F."/>
            <person name="Nusskern D.R."/>
            <person name="Shue B.C."/>
            <person name="Zheng X.H."/>
            <person name="Zhong F."/>
            <person name="Delcher A.L."/>
            <person name="Huson D.H."/>
            <person name="Kravitz S.A."/>
            <person name="Mouchard L."/>
            <person name="Reinert K."/>
            <person name="Remington K.A."/>
            <person name="Clark A.G."/>
            <person name="Waterman M.S."/>
            <person name="Eichler E.E."/>
            <person name="Adams M.D."/>
            <person name="Hunkapiller M.W."/>
            <person name="Myers E.W."/>
            <person name="Venter J.C."/>
        </authorList>
    </citation>
    <scope>NUCLEOTIDE SEQUENCE [LARGE SCALE GENOMIC DNA]</scope>
</reference>
<reference key="8">
    <citation type="journal article" date="2004" name="Genome Res.">
        <title>The status, quality, and expansion of the NIH full-length cDNA project: the Mammalian Gene Collection (MGC).</title>
        <authorList>
            <consortium name="The MGC Project Team"/>
        </authorList>
    </citation>
    <scope>NUCLEOTIDE SEQUENCE [LARGE SCALE MRNA] (ISOFORM 1)</scope>
    <source>
        <tissue>Hypothalamus</tissue>
        <tissue>Lung</tissue>
        <tissue>Prostate</tissue>
        <tissue>Testis</tissue>
    </source>
</reference>
<reference key="9">
    <citation type="journal article" date="2003" name="J. Protein Chem.">
        <title>Characterization and analysis of posttranslational modifications of the human large cytoplasmic ribosomal subunit proteins by mass spectrometry and Edman sequencing.</title>
        <authorList>
            <person name="Odintsova T.I."/>
            <person name="Muller E.C."/>
            <person name="Ivanov A.V."/>
            <person name="Egorov T.A."/>
            <person name="Bienert R."/>
            <person name="Vladimirov S.N."/>
            <person name="Kostka S."/>
            <person name="Otto A."/>
            <person name="Wittmann-Liebold B."/>
            <person name="Karpova G.G."/>
        </authorList>
    </citation>
    <scope>PROTEIN SEQUENCE OF 2-10</scope>
    <scope>IDENTIFICATION BY MASS SPECTROMETRY</scope>
    <scope>FUNCTION</scope>
    <scope>SUBUNIT</scope>
</reference>
<reference key="10">
    <citation type="submission" date="2008-02" db="UniProtKB">
        <authorList>
            <person name="Bienvenut W.V."/>
            <person name="Calvo F."/>
            <person name="Kolch W."/>
        </authorList>
    </citation>
    <scope>PROTEIN SEQUENCE OF 2-13; 31-42; 47-55; 75-82; 86-96 AND 106-124</scope>
    <scope>CLEAVAGE OF INITIATOR METHIONINE</scope>
    <scope>IDENTIFICATION BY MASS SPECTROMETRY</scope>
    <source>
        <tissue>Cervix carcinoma</tissue>
    </source>
</reference>
<reference key="11">
    <citation type="journal article" date="1998" name="Genome Res.">
        <title>A map of 75 human ribosomal protein genes.</title>
        <authorList>
            <person name="Kenmochi N."/>
            <person name="Kawaguchi T."/>
            <person name="Rozen S."/>
            <person name="Davis E."/>
            <person name="Goodman N."/>
            <person name="Hudson T.J."/>
            <person name="Tanaka T."/>
            <person name="Page D.C."/>
        </authorList>
    </citation>
    <scope>NUCLEOTIDE SEQUENCE [GENOMIC DNA] OF 170-183</scope>
</reference>
<reference key="12">
    <citation type="journal article" date="2014" name="Curr. Opin. Struct. Biol.">
        <title>A new system for naming ribosomal proteins.</title>
        <authorList>
            <person name="Ban N."/>
            <person name="Beckmann R."/>
            <person name="Cate J.H.D."/>
            <person name="Dinman J.D."/>
            <person name="Dragon F."/>
            <person name="Ellis S.R."/>
            <person name="Lafontaine D.L.J."/>
            <person name="Lindahl L."/>
            <person name="Liljas A."/>
            <person name="Lipton J.M."/>
            <person name="McAlear M.A."/>
            <person name="Moore P.B."/>
            <person name="Noller H.F."/>
            <person name="Ortega J."/>
            <person name="Panse V.G."/>
            <person name="Ramakrishnan V."/>
            <person name="Spahn C.M.T."/>
            <person name="Steitz T.A."/>
            <person name="Tchorzewski M."/>
            <person name="Tollervey D."/>
            <person name="Warren A.J."/>
            <person name="Williamson J.R."/>
            <person name="Wilson D."/>
            <person name="Yonath A."/>
            <person name="Yusupov M."/>
        </authorList>
    </citation>
    <scope>NOMENCLATURE</scope>
</reference>
<reference key="13">
    <citation type="journal article" date="2013" name="Nature">
        <title>Structures of the human and Drosophila 80S ribosome.</title>
        <authorList>
            <person name="Anger A.M."/>
            <person name="Armache J.P."/>
            <person name="Berninghausen O."/>
            <person name="Habeck M."/>
            <person name="Subklewe M."/>
            <person name="Wilson D.N."/>
            <person name="Beckmann R."/>
        </authorList>
    </citation>
    <scope>STRUCTURE BY ELECTRON MICROSCOPY (5.0 ANGSTROMS)</scope>
    <scope>FUNCTION</scope>
    <scope>SUBUNIT</scope>
    <scope>SUBCELLULAR LOCATION</scope>
</reference>
<reference evidence="12 13 14 15" key="14">
    <citation type="journal article" date="2020" name="Nat. Commun.">
        <title>Structural snapshots of human pre-60S ribosomal particles before and after nuclear export.</title>
        <authorList>
            <person name="Liang X."/>
            <person name="Zuo M.Q."/>
            <person name="Zhang Y."/>
            <person name="Li N."/>
            <person name="Ma C."/>
            <person name="Dong M.Q."/>
            <person name="Gao N."/>
        </authorList>
    </citation>
    <scope>STRUCTURE BY ELECTRON MICROSCOPY (3.09 ANGSTROMS)</scope>
    <scope>FUNCTION</scope>
    <scope>SUBUNIT</scope>
</reference>
<dbReference type="EMBL" id="X53777">
    <property type="protein sequence ID" value="CAA37793.1"/>
    <property type="molecule type" value="mRNA"/>
</dbReference>
<dbReference type="EMBL" id="AB061824">
    <property type="protein sequence ID" value="BAB79462.1"/>
    <property type="molecule type" value="Genomic_DNA"/>
</dbReference>
<dbReference type="EMBL" id="AC100778">
    <property type="status" value="NOT_ANNOTATED_CDS"/>
    <property type="molecule type" value="Genomic_DNA"/>
</dbReference>
<dbReference type="EMBL" id="AK304659">
    <property type="protein sequence ID" value="BAG65434.1"/>
    <property type="molecule type" value="mRNA"/>
</dbReference>
<dbReference type="EMBL" id="AK311828">
    <property type="protein sequence ID" value="BAG34770.1"/>
    <property type="molecule type" value="mRNA"/>
</dbReference>
<dbReference type="EMBL" id="BX393840">
    <property type="status" value="NOT_ANNOTATED_CDS"/>
    <property type="molecule type" value="mRNA"/>
</dbReference>
<dbReference type="EMBL" id="CH471096">
    <property type="protein sequence ID" value="EAW62940.1"/>
    <property type="molecule type" value="Genomic_DNA"/>
</dbReference>
<dbReference type="EMBL" id="BC000502">
    <property type="protein sequence ID" value="AAH00502.1"/>
    <property type="molecule type" value="mRNA"/>
</dbReference>
<dbReference type="EMBL" id="BC017831">
    <property type="protein sequence ID" value="AAH17831.1"/>
    <property type="molecule type" value="mRNA"/>
</dbReference>
<dbReference type="EMBL" id="BC066323">
    <property type="protein sequence ID" value="AAH66323.1"/>
    <property type="molecule type" value="mRNA"/>
</dbReference>
<dbReference type="EMBL" id="BC066324">
    <property type="protein sequence ID" value="AAH66324.1"/>
    <property type="molecule type" value="mRNA"/>
</dbReference>
<dbReference type="EMBL" id="BC106031">
    <property type="protein sequence ID" value="AAI06032.1"/>
    <property type="molecule type" value="mRNA"/>
</dbReference>
<dbReference type="EMBL" id="AB007174">
    <property type="protein sequence ID" value="BAA25834.1"/>
    <property type="molecule type" value="Genomic_DNA"/>
</dbReference>
<dbReference type="CCDS" id="CCDS45865.1">
    <molecule id="P18621-1"/>
</dbReference>
<dbReference type="CCDS" id="CCDS56070.1">
    <molecule id="P18621-2"/>
</dbReference>
<dbReference type="PIR" id="A61192">
    <property type="entry name" value="A61192"/>
</dbReference>
<dbReference type="PIR" id="S11218">
    <property type="entry name" value="R5HU22"/>
</dbReference>
<dbReference type="RefSeq" id="NP_000976.1">
    <molecule id="P18621-1"/>
    <property type="nucleotide sequence ID" value="NM_000985.5"/>
</dbReference>
<dbReference type="RefSeq" id="NP_001030178.1">
    <molecule id="P18621-1"/>
    <property type="nucleotide sequence ID" value="NM_001035006.5"/>
</dbReference>
<dbReference type="RefSeq" id="NP_001186269.1">
    <molecule id="P18621-1"/>
    <property type="nucleotide sequence ID" value="NM_001199340.2"/>
</dbReference>
<dbReference type="RefSeq" id="NP_001186270.1">
    <molecule id="P18621-1"/>
    <property type="nucleotide sequence ID" value="NM_001199341.3"/>
</dbReference>
<dbReference type="RefSeq" id="NP_001186271.1">
    <molecule id="P18621-1"/>
    <property type="nucleotide sequence ID" value="NM_001199342.3"/>
</dbReference>
<dbReference type="RefSeq" id="NP_001186272.1">
    <molecule id="P18621-1"/>
    <property type="nucleotide sequence ID" value="NM_001199343.3"/>
</dbReference>
<dbReference type="RefSeq" id="NP_001186273.1">
    <molecule id="P18621-1"/>
    <property type="nucleotide sequence ID" value="NM_001199344.3"/>
</dbReference>
<dbReference type="RefSeq" id="NP_001186274.1">
    <molecule id="P18621-2"/>
    <property type="nucleotide sequence ID" value="NM_001199345.2"/>
</dbReference>
<dbReference type="RefSeq" id="NP_001356485.1">
    <molecule id="P18621-1"/>
    <property type="nucleotide sequence ID" value="NM_001369556.1"/>
</dbReference>
<dbReference type="RefSeq" id="NP_001356486.1">
    <molecule id="P18621-1"/>
    <property type="nucleotide sequence ID" value="NM_001369557.1"/>
</dbReference>
<dbReference type="RefSeq" id="NP_001356487.1">
    <molecule id="P18621-1"/>
    <property type="nucleotide sequence ID" value="NM_001369558.1"/>
</dbReference>
<dbReference type="RefSeq" id="NP_001356491.1">
    <molecule id="P18621-2"/>
    <property type="nucleotide sequence ID" value="NM_001369562.1"/>
</dbReference>
<dbReference type="RefSeq" id="NP_001356492.1">
    <molecule id="P18621-2"/>
    <property type="nucleotide sequence ID" value="NM_001369563.1"/>
</dbReference>
<dbReference type="PDB" id="4UG0">
    <property type="method" value="EM"/>
    <property type="chains" value="LP=1-184"/>
</dbReference>
<dbReference type="PDB" id="4V6X">
    <property type="method" value="EM"/>
    <property type="resolution" value="5.00 A"/>
    <property type="chains" value="CP=1-184"/>
</dbReference>
<dbReference type="PDB" id="5A8L">
    <property type="method" value="EM"/>
    <property type="resolution" value="3.80 A"/>
    <property type="chains" value="D=1-184"/>
</dbReference>
<dbReference type="PDB" id="5AJ0">
    <property type="method" value="EM"/>
    <property type="resolution" value="3.50 A"/>
    <property type="chains" value="AP=1-184"/>
</dbReference>
<dbReference type="PDB" id="5LKS">
    <property type="method" value="EM"/>
    <property type="resolution" value="3.60 A"/>
    <property type="chains" value="LP=1-184"/>
</dbReference>
<dbReference type="PDB" id="5T2C">
    <property type="method" value="EM"/>
    <property type="resolution" value="3.60 A"/>
    <property type="chains" value="J=1-160"/>
</dbReference>
<dbReference type="PDB" id="6IP5">
    <property type="method" value="EM"/>
    <property type="resolution" value="3.90 A"/>
    <property type="chains" value="2J=1-184"/>
</dbReference>
<dbReference type="PDB" id="6IP6">
    <property type="method" value="EM"/>
    <property type="resolution" value="4.50 A"/>
    <property type="chains" value="2J=1-184"/>
</dbReference>
<dbReference type="PDB" id="6IP8">
    <property type="method" value="EM"/>
    <property type="resolution" value="3.90 A"/>
    <property type="chains" value="2J=1-184"/>
</dbReference>
<dbReference type="PDB" id="6LQM">
    <property type="method" value="EM"/>
    <property type="resolution" value="3.09 A"/>
    <property type="chains" value="Y=1-184"/>
</dbReference>
<dbReference type="PDB" id="6LSR">
    <property type="method" value="EM"/>
    <property type="resolution" value="3.13 A"/>
    <property type="chains" value="Y=1-184"/>
</dbReference>
<dbReference type="PDB" id="6LSS">
    <property type="method" value="EM"/>
    <property type="resolution" value="3.23 A"/>
    <property type="chains" value="Y=1-184"/>
</dbReference>
<dbReference type="PDB" id="6LU8">
    <property type="method" value="EM"/>
    <property type="resolution" value="3.13 A"/>
    <property type="chains" value="Y=1-184"/>
</dbReference>
<dbReference type="PDB" id="6OLE">
    <property type="method" value="EM"/>
    <property type="resolution" value="3.10 A"/>
    <property type="chains" value="Q=2-154"/>
</dbReference>
<dbReference type="PDB" id="6OLF">
    <property type="method" value="EM"/>
    <property type="resolution" value="3.90 A"/>
    <property type="chains" value="Q=2-154"/>
</dbReference>
<dbReference type="PDB" id="6OLG">
    <property type="method" value="EM"/>
    <property type="resolution" value="3.40 A"/>
    <property type="chains" value="AP=2-154"/>
</dbReference>
<dbReference type="PDB" id="6OLI">
    <property type="method" value="EM"/>
    <property type="resolution" value="3.50 A"/>
    <property type="chains" value="Q=2-154"/>
</dbReference>
<dbReference type="PDB" id="6OLZ">
    <property type="method" value="EM"/>
    <property type="resolution" value="3.90 A"/>
    <property type="chains" value="AP=2-154"/>
</dbReference>
<dbReference type="PDB" id="6OM0">
    <property type="method" value="EM"/>
    <property type="resolution" value="3.10 A"/>
    <property type="chains" value="Q=2-154"/>
</dbReference>
<dbReference type="PDB" id="6OM7">
    <property type="method" value="EM"/>
    <property type="resolution" value="3.70 A"/>
    <property type="chains" value="Q=2-154"/>
</dbReference>
<dbReference type="PDB" id="6QZP">
    <property type="method" value="EM"/>
    <property type="resolution" value="2.90 A"/>
    <property type="chains" value="LP=2-154"/>
</dbReference>
<dbReference type="PDB" id="6W6L">
    <property type="method" value="EM"/>
    <property type="resolution" value="3.84 A"/>
    <property type="chains" value="Q=1-184"/>
</dbReference>
<dbReference type="PDB" id="6XA1">
    <property type="method" value="EM"/>
    <property type="resolution" value="2.80 A"/>
    <property type="chains" value="LP=2-154"/>
</dbReference>
<dbReference type="PDB" id="6Y0G">
    <property type="method" value="EM"/>
    <property type="resolution" value="3.20 A"/>
    <property type="chains" value="LP=1-184"/>
</dbReference>
<dbReference type="PDB" id="6Y2L">
    <property type="method" value="EM"/>
    <property type="resolution" value="3.00 A"/>
    <property type="chains" value="LP=1-184"/>
</dbReference>
<dbReference type="PDB" id="6Y57">
    <property type="method" value="EM"/>
    <property type="resolution" value="3.50 A"/>
    <property type="chains" value="LP=1-184"/>
</dbReference>
<dbReference type="PDB" id="6Y6X">
    <property type="method" value="EM"/>
    <property type="resolution" value="2.80 A"/>
    <property type="chains" value="LP=2-154"/>
</dbReference>
<dbReference type="PDB" id="6Z6L">
    <property type="method" value="EM"/>
    <property type="resolution" value="3.00 A"/>
    <property type="chains" value="LP=1-184"/>
</dbReference>
<dbReference type="PDB" id="6Z6M">
    <property type="method" value="EM"/>
    <property type="resolution" value="3.10 A"/>
    <property type="chains" value="LP=1-184"/>
</dbReference>
<dbReference type="PDB" id="6Z6N">
    <property type="method" value="EM"/>
    <property type="resolution" value="2.90 A"/>
    <property type="chains" value="LP=1-184"/>
</dbReference>
<dbReference type="PDB" id="6ZM7">
    <property type="method" value="EM"/>
    <property type="resolution" value="2.70 A"/>
    <property type="chains" value="LP=1-184"/>
</dbReference>
<dbReference type="PDB" id="6ZME">
    <property type="method" value="EM"/>
    <property type="resolution" value="3.00 A"/>
    <property type="chains" value="LP=1-184"/>
</dbReference>
<dbReference type="PDB" id="6ZMI">
    <property type="method" value="EM"/>
    <property type="resolution" value="2.60 A"/>
    <property type="chains" value="LP=1-184"/>
</dbReference>
<dbReference type="PDB" id="6ZMO">
    <property type="method" value="EM"/>
    <property type="resolution" value="3.10 A"/>
    <property type="chains" value="LP=1-184"/>
</dbReference>
<dbReference type="PDB" id="7BHP">
    <property type="method" value="EM"/>
    <property type="resolution" value="3.30 A"/>
    <property type="chains" value="LP=1-184"/>
</dbReference>
<dbReference type="PDB" id="7F5S">
    <property type="method" value="EM"/>
    <property type="resolution" value="2.72 A"/>
    <property type="chains" value="LP=1-184"/>
</dbReference>
<dbReference type="PDB" id="7OW7">
    <property type="method" value="EM"/>
    <property type="resolution" value="2.20 A"/>
    <property type="chains" value="J=1-184"/>
</dbReference>
<dbReference type="PDB" id="7QVP">
    <property type="method" value="EM"/>
    <property type="resolution" value="3.00 A"/>
    <property type="chains" value="LP=1-154, MP=1-184"/>
</dbReference>
<dbReference type="PDB" id="7XNX">
    <property type="method" value="EM"/>
    <property type="resolution" value="2.70 A"/>
    <property type="chains" value="LP=1-184"/>
</dbReference>
<dbReference type="PDB" id="7XNY">
    <property type="method" value="EM"/>
    <property type="resolution" value="2.50 A"/>
    <property type="chains" value="LP=1-184"/>
</dbReference>
<dbReference type="PDB" id="8A3D">
    <property type="method" value="EM"/>
    <property type="resolution" value="1.67 A"/>
    <property type="chains" value="J=1-184"/>
</dbReference>
<dbReference type="PDB" id="8FKP">
    <property type="method" value="EM"/>
    <property type="resolution" value="2.85 A"/>
    <property type="chains" value="LA=1-184"/>
</dbReference>
<dbReference type="PDB" id="8FKQ">
    <property type="method" value="EM"/>
    <property type="resolution" value="2.76 A"/>
    <property type="chains" value="LA=1-184"/>
</dbReference>
<dbReference type="PDB" id="8FKR">
    <property type="method" value="EM"/>
    <property type="resolution" value="2.89 A"/>
    <property type="chains" value="LA=1-184"/>
</dbReference>
<dbReference type="PDB" id="8FKS">
    <property type="method" value="EM"/>
    <property type="resolution" value="2.88 A"/>
    <property type="chains" value="LA=1-184"/>
</dbReference>
<dbReference type="PDB" id="8FKT">
    <property type="method" value="EM"/>
    <property type="resolution" value="2.81 A"/>
    <property type="chains" value="LA=1-184"/>
</dbReference>
<dbReference type="PDB" id="8FKU">
    <property type="method" value="EM"/>
    <property type="resolution" value="2.82 A"/>
    <property type="chains" value="LA=1-184"/>
</dbReference>
<dbReference type="PDB" id="8FKV">
    <property type="method" value="EM"/>
    <property type="resolution" value="2.47 A"/>
    <property type="chains" value="LA=1-184"/>
</dbReference>
<dbReference type="PDB" id="8FKW">
    <property type="method" value="EM"/>
    <property type="resolution" value="2.50 A"/>
    <property type="chains" value="LA=1-184"/>
</dbReference>
<dbReference type="PDB" id="8FKX">
    <property type="method" value="EM"/>
    <property type="resolution" value="2.59 A"/>
    <property type="chains" value="LA=1-184"/>
</dbReference>
<dbReference type="PDB" id="8FKY">
    <property type="method" value="EM"/>
    <property type="resolution" value="2.67 A"/>
    <property type="chains" value="LA=1-184"/>
</dbReference>
<dbReference type="PDB" id="8FKZ">
    <property type="method" value="EM"/>
    <property type="resolution" value="3.04 A"/>
    <property type="chains" value="LA=1-184"/>
</dbReference>
<dbReference type="PDB" id="8FL2">
    <property type="method" value="EM"/>
    <property type="resolution" value="2.67 A"/>
    <property type="chains" value="LA=1-184"/>
</dbReference>
<dbReference type="PDB" id="8FL3">
    <property type="method" value="EM"/>
    <property type="resolution" value="2.53 A"/>
    <property type="chains" value="LA=1-184"/>
</dbReference>
<dbReference type="PDB" id="8FL4">
    <property type="method" value="EM"/>
    <property type="resolution" value="2.89 A"/>
    <property type="chains" value="LA=1-184"/>
</dbReference>
<dbReference type="PDB" id="8FL6">
    <property type="method" value="EM"/>
    <property type="resolution" value="2.62 A"/>
    <property type="chains" value="LA=1-184"/>
</dbReference>
<dbReference type="PDB" id="8FL7">
    <property type="method" value="EM"/>
    <property type="resolution" value="2.55 A"/>
    <property type="chains" value="LA=1-184"/>
</dbReference>
<dbReference type="PDB" id="8FL9">
    <property type="method" value="EM"/>
    <property type="resolution" value="2.75 A"/>
    <property type="chains" value="LA=1-184"/>
</dbReference>
<dbReference type="PDB" id="8FLA">
    <property type="method" value="EM"/>
    <property type="resolution" value="2.63 A"/>
    <property type="chains" value="LA=1-184"/>
</dbReference>
<dbReference type="PDB" id="8FLB">
    <property type="method" value="EM"/>
    <property type="resolution" value="2.55 A"/>
    <property type="chains" value="LA=1-184"/>
</dbReference>
<dbReference type="PDB" id="8FLC">
    <property type="method" value="EM"/>
    <property type="resolution" value="2.76 A"/>
    <property type="chains" value="LA=1-184"/>
</dbReference>
<dbReference type="PDB" id="8FLD">
    <property type="method" value="EM"/>
    <property type="resolution" value="2.58 A"/>
    <property type="chains" value="LA=1-184"/>
</dbReference>
<dbReference type="PDB" id="8FLE">
    <property type="method" value="EM"/>
    <property type="resolution" value="2.48 A"/>
    <property type="chains" value="LA=1-184"/>
</dbReference>
<dbReference type="PDB" id="8FLF">
    <property type="method" value="EM"/>
    <property type="resolution" value="2.65 A"/>
    <property type="chains" value="LA=1-184"/>
</dbReference>
<dbReference type="PDB" id="8G5Y">
    <property type="method" value="EM"/>
    <property type="resolution" value="2.29 A"/>
    <property type="chains" value="LP=1-184"/>
</dbReference>
<dbReference type="PDB" id="8G5Z">
    <property type="method" value="EM"/>
    <property type="resolution" value="2.64 A"/>
    <property type="chains" value="LP=2-154"/>
</dbReference>
<dbReference type="PDB" id="8G60">
    <property type="method" value="EM"/>
    <property type="resolution" value="2.54 A"/>
    <property type="chains" value="LP=1-184"/>
</dbReference>
<dbReference type="PDB" id="8G61">
    <property type="method" value="EM"/>
    <property type="resolution" value="2.94 A"/>
    <property type="chains" value="LP=1-184"/>
</dbReference>
<dbReference type="PDB" id="8G6J">
    <property type="method" value="EM"/>
    <property type="resolution" value="2.80 A"/>
    <property type="chains" value="LP=1-184"/>
</dbReference>
<dbReference type="PDB" id="8GLP">
    <property type="method" value="EM"/>
    <property type="resolution" value="1.67 A"/>
    <property type="chains" value="LP=1-184"/>
</dbReference>
<dbReference type="PDB" id="8IDT">
    <property type="method" value="EM"/>
    <property type="resolution" value="2.80 A"/>
    <property type="chains" value="Y=1-184"/>
</dbReference>
<dbReference type="PDB" id="8IDY">
    <property type="method" value="EM"/>
    <property type="resolution" value="3.00 A"/>
    <property type="chains" value="Y=1-184"/>
</dbReference>
<dbReference type="PDB" id="8IE3">
    <property type="method" value="EM"/>
    <property type="resolution" value="3.30 A"/>
    <property type="chains" value="Y=1-184"/>
</dbReference>
<dbReference type="PDB" id="8IFD">
    <property type="method" value="EM"/>
    <property type="resolution" value="2.59 A"/>
    <property type="chains" value="2J=1-184"/>
</dbReference>
<dbReference type="PDB" id="8IFE">
    <property type="method" value="EM"/>
    <property type="resolution" value="2.57 A"/>
    <property type="chains" value="2J=1-184"/>
</dbReference>
<dbReference type="PDB" id="8INE">
    <property type="method" value="EM"/>
    <property type="resolution" value="3.20 A"/>
    <property type="chains" value="Y=1-184"/>
</dbReference>
<dbReference type="PDB" id="8INF">
    <property type="method" value="EM"/>
    <property type="resolution" value="3.00 A"/>
    <property type="chains" value="Y=1-184"/>
</dbReference>
<dbReference type="PDB" id="8INK">
    <property type="method" value="EM"/>
    <property type="resolution" value="3.20 A"/>
    <property type="chains" value="Y=1-184"/>
</dbReference>
<dbReference type="PDB" id="8IPD">
    <property type="method" value="EM"/>
    <property type="resolution" value="3.20 A"/>
    <property type="chains" value="Y=1-184"/>
</dbReference>
<dbReference type="PDB" id="8IPX">
    <property type="method" value="EM"/>
    <property type="resolution" value="4.30 A"/>
    <property type="chains" value="Y=1-184"/>
</dbReference>
<dbReference type="PDB" id="8IPY">
    <property type="method" value="EM"/>
    <property type="resolution" value="3.20 A"/>
    <property type="chains" value="Y=1-184"/>
</dbReference>
<dbReference type="PDB" id="8IR1">
    <property type="method" value="EM"/>
    <property type="resolution" value="3.30 A"/>
    <property type="chains" value="Y=1-184"/>
</dbReference>
<dbReference type="PDB" id="8IR3">
    <property type="method" value="EM"/>
    <property type="resolution" value="3.50 A"/>
    <property type="chains" value="Y=1-184"/>
</dbReference>
<dbReference type="PDB" id="8JDJ">
    <property type="method" value="EM"/>
    <property type="resolution" value="2.50 A"/>
    <property type="chains" value="U=1-184"/>
</dbReference>
<dbReference type="PDB" id="8JDK">
    <property type="method" value="EM"/>
    <property type="resolution" value="2.26 A"/>
    <property type="chains" value="U=1-184"/>
</dbReference>
<dbReference type="PDB" id="8JDL">
    <property type="method" value="EM"/>
    <property type="resolution" value="2.42 A"/>
    <property type="chains" value="U=1-184"/>
</dbReference>
<dbReference type="PDB" id="8JDM">
    <property type="method" value="EM"/>
    <property type="resolution" value="2.67 A"/>
    <property type="chains" value="U=1-184"/>
</dbReference>
<dbReference type="PDB" id="8K2C">
    <property type="method" value="EM"/>
    <property type="resolution" value="2.40 A"/>
    <property type="chains" value="LP=1-184"/>
</dbReference>
<dbReference type="PDB" id="8OHD">
    <property type="method" value="EM"/>
    <property type="resolution" value="3.10 A"/>
    <property type="chains" value="LP=1-184"/>
</dbReference>
<dbReference type="PDB" id="8OJ0">
    <property type="method" value="EM"/>
    <property type="resolution" value="3.30 A"/>
    <property type="chains" value="LP=1-184"/>
</dbReference>
<dbReference type="PDB" id="8OJ5">
    <property type="method" value="EM"/>
    <property type="resolution" value="2.90 A"/>
    <property type="chains" value="LP=1-184"/>
</dbReference>
<dbReference type="PDB" id="8OJ8">
    <property type="method" value="EM"/>
    <property type="resolution" value="3.30 A"/>
    <property type="chains" value="LP=1-184"/>
</dbReference>
<dbReference type="PDB" id="8QFD">
    <property type="method" value="EM"/>
    <property type="resolution" value="2.20 A"/>
    <property type="chains" value="P=1-184"/>
</dbReference>
<dbReference type="PDB" id="8QOI">
    <property type="method" value="EM"/>
    <property type="resolution" value="1.90 A"/>
    <property type="chains" value="LP=1-184"/>
</dbReference>
<dbReference type="PDB" id="8QYX">
    <property type="method" value="EM"/>
    <property type="resolution" value="1.78 A"/>
    <property type="chains" value="J1=1-184"/>
</dbReference>
<dbReference type="PDB" id="8RL2">
    <property type="method" value="EM"/>
    <property type="resolution" value="2.84 A"/>
    <property type="chains" value="LP=1-184"/>
</dbReference>
<dbReference type="PDB" id="8UKB">
    <property type="method" value="EM"/>
    <property type="resolution" value="3.05 A"/>
    <property type="chains" value="LP=2-154"/>
</dbReference>
<dbReference type="PDB" id="8XSX">
    <property type="method" value="EM"/>
    <property type="resolution" value="2.40 A"/>
    <property type="chains" value="LP=1-184"/>
</dbReference>
<dbReference type="PDB" id="8XSY">
    <property type="method" value="EM"/>
    <property type="resolution" value="3.00 A"/>
    <property type="chains" value="LP=1-184"/>
</dbReference>
<dbReference type="PDB" id="8XSZ">
    <property type="method" value="EM"/>
    <property type="resolution" value="3.20 A"/>
    <property type="chains" value="LP=1-184"/>
</dbReference>
<dbReference type="PDB" id="8Y0W">
    <property type="method" value="EM"/>
    <property type="resolution" value="3.40 A"/>
    <property type="chains" value="LP=1-184"/>
</dbReference>
<dbReference type="PDB" id="8Y0X">
    <property type="method" value="EM"/>
    <property type="resolution" value="3.30 A"/>
    <property type="chains" value="LP=1-184"/>
</dbReference>
<dbReference type="PDB" id="8YOO">
    <property type="method" value="EM"/>
    <property type="resolution" value="2.00 A"/>
    <property type="chains" value="LP=1-184"/>
</dbReference>
<dbReference type="PDB" id="8YOP">
    <property type="method" value="EM"/>
    <property type="resolution" value="2.20 A"/>
    <property type="chains" value="LP=1-184"/>
</dbReference>
<dbReference type="PDB" id="9C3H">
    <property type="method" value="EM"/>
    <property type="resolution" value="2.00 A"/>
    <property type="chains" value="Lh=1-184"/>
</dbReference>
<dbReference type="PDB" id="9G8M">
    <property type="method" value="EM"/>
    <property type="resolution" value="3.30 A"/>
    <property type="chains" value="LP=1-184"/>
</dbReference>
<dbReference type="PDB" id="9GMO">
    <property type="method" value="EM"/>
    <property type="resolution" value="2.59 A"/>
    <property type="chains" value="J=1-184"/>
</dbReference>
<dbReference type="PDBsum" id="4UG0"/>
<dbReference type="PDBsum" id="4V6X"/>
<dbReference type="PDBsum" id="5A8L"/>
<dbReference type="PDBsum" id="5AJ0"/>
<dbReference type="PDBsum" id="5LKS"/>
<dbReference type="PDBsum" id="5T2C"/>
<dbReference type="PDBsum" id="6IP5"/>
<dbReference type="PDBsum" id="6IP6"/>
<dbReference type="PDBsum" id="6IP8"/>
<dbReference type="PDBsum" id="6LQM"/>
<dbReference type="PDBsum" id="6LSR"/>
<dbReference type="PDBsum" id="6LSS"/>
<dbReference type="PDBsum" id="6LU8"/>
<dbReference type="PDBsum" id="6OLE"/>
<dbReference type="PDBsum" id="6OLF"/>
<dbReference type="PDBsum" id="6OLG"/>
<dbReference type="PDBsum" id="6OLI"/>
<dbReference type="PDBsum" id="6OLZ"/>
<dbReference type="PDBsum" id="6OM0"/>
<dbReference type="PDBsum" id="6OM7"/>
<dbReference type="PDBsum" id="6QZP"/>
<dbReference type="PDBsum" id="6W6L"/>
<dbReference type="PDBsum" id="6XA1"/>
<dbReference type="PDBsum" id="6Y0G"/>
<dbReference type="PDBsum" id="6Y2L"/>
<dbReference type="PDBsum" id="6Y57"/>
<dbReference type="PDBsum" id="6Y6X"/>
<dbReference type="PDBsum" id="6Z6L"/>
<dbReference type="PDBsum" id="6Z6M"/>
<dbReference type="PDBsum" id="6Z6N"/>
<dbReference type="PDBsum" id="6ZM7"/>
<dbReference type="PDBsum" id="6ZME"/>
<dbReference type="PDBsum" id="6ZMI"/>
<dbReference type="PDBsum" id="6ZMO"/>
<dbReference type="PDBsum" id="7BHP"/>
<dbReference type="PDBsum" id="7F5S"/>
<dbReference type="PDBsum" id="7OW7"/>
<dbReference type="PDBsum" id="7QVP"/>
<dbReference type="PDBsum" id="7XNX"/>
<dbReference type="PDBsum" id="7XNY"/>
<dbReference type="PDBsum" id="8A3D"/>
<dbReference type="PDBsum" id="8FKP"/>
<dbReference type="PDBsum" id="8FKQ"/>
<dbReference type="PDBsum" id="8FKR"/>
<dbReference type="PDBsum" id="8FKS"/>
<dbReference type="PDBsum" id="8FKT"/>
<dbReference type="PDBsum" id="8FKU"/>
<dbReference type="PDBsum" id="8FKV"/>
<dbReference type="PDBsum" id="8FKW"/>
<dbReference type="PDBsum" id="8FKX"/>
<dbReference type="PDBsum" id="8FKY"/>
<dbReference type="PDBsum" id="8FKZ"/>
<dbReference type="PDBsum" id="8FL2"/>
<dbReference type="PDBsum" id="8FL3"/>
<dbReference type="PDBsum" id="8FL4"/>
<dbReference type="PDBsum" id="8FL6"/>
<dbReference type="PDBsum" id="8FL7"/>
<dbReference type="PDBsum" id="8FL9"/>
<dbReference type="PDBsum" id="8FLA"/>
<dbReference type="PDBsum" id="8FLB"/>
<dbReference type="PDBsum" id="8FLC"/>
<dbReference type="PDBsum" id="8FLD"/>
<dbReference type="PDBsum" id="8FLE"/>
<dbReference type="PDBsum" id="8FLF"/>
<dbReference type="PDBsum" id="8G5Y"/>
<dbReference type="PDBsum" id="8G5Z"/>
<dbReference type="PDBsum" id="8G60"/>
<dbReference type="PDBsum" id="8G61"/>
<dbReference type="PDBsum" id="8G6J"/>
<dbReference type="PDBsum" id="8GLP"/>
<dbReference type="PDBsum" id="8IDT"/>
<dbReference type="PDBsum" id="8IDY"/>
<dbReference type="PDBsum" id="8IE3"/>
<dbReference type="PDBsum" id="8IFD"/>
<dbReference type="PDBsum" id="8IFE"/>
<dbReference type="PDBsum" id="8INE"/>
<dbReference type="PDBsum" id="8INF"/>
<dbReference type="PDBsum" id="8INK"/>
<dbReference type="PDBsum" id="8IPD"/>
<dbReference type="PDBsum" id="8IPX"/>
<dbReference type="PDBsum" id="8IPY"/>
<dbReference type="PDBsum" id="8IR1"/>
<dbReference type="PDBsum" id="8IR3"/>
<dbReference type="PDBsum" id="8JDJ"/>
<dbReference type="PDBsum" id="8JDK"/>
<dbReference type="PDBsum" id="8JDL"/>
<dbReference type="PDBsum" id="8JDM"/>
<dbReference type="PDBsum" id="8K2C"/>
<dbReference type="PDBsum" id="8OHD"/>
<dbReference type="PDBsum" id="8OJ0"/>
<dbReference type="PDBsum" id="8OJ5"/>
<dbReference type="PDBsum" id="8OJ8"/>
<dbReference type="PDBsum" id="8QFD"/>
<dbReference type="PDBsum" id="8QOI"/>
<dbReference type="PDBsum" id="8QYX"/>
<dbReference type="PDBsum" id="8RL2"/>
<dbReference type="PDBsum" id="8UKB"/>
<dbReference type="PDBsum" id="8XSX"/>
<dbReference type="PDBsum" id="8XSY"/>
<dbReference type="PDBsum" id="8XSZ"/>
<dbReference type="PDBsum" id="8Y0W"/>
<dbReference type="PDBsum" id="8Y0X"/>
<dbReference type="PDBsum" id="8YOO"/>
<dbReference type="PDBsum" id="8YOP"/>
<dbReference type="PDBsum" id="9C3H"/>
<dbReference type="PDBsum" id="9G8M"/>
<dbReference type="PDBsum" id="9GMO"/>
<dbReference type="EMDB" id="EMD-0948"/>
<dbReference type="EMDB" id="EMD-0963"/>
<dbReference type="EMDB" id="EMD-0964"/>
<dbReference type="EMDB" id="EMD-0978"/>
<dbReference type="EMDB" id="EMD-10668"/>
<dbReference type="EMDB" id="EMD-10674"/>
<dbReference type="EMDB" id="EMD-10690"/>
<dbReference type="EMDB" id="EMD-10709"/>
<dbReference type="EMDB" id="EMD-11098"/>
<dbReference type="EMDB" id="EMD-11099"/>
<dbReference type="EMDB" id="EMD-11100"/>
<dbReference type="EMDB" id="EMD-11288"/>
<dbReference type="EMDB" id="EMD-11289"/>
<dbReference type="EMDB" id="EMD-11292"/>
<dbReference type="EMDB" id="EMD-11299"/>
<dbReference type="EMDB" id="EMD-12189"/>
<dbReference type="EMDB" id="EMD-13094"/>
<dbReference type="EMDB" id="EMD-14181"/>
<dbReference type="EMDB" id="EMD-15113"/>
<dbReference type="EMDB" id="EMD-16880"/>
<dbReference type="EMDB" id="EMD-16902"/>
<dbReference type="EMDB" id="EMD-16905"/>
<dbReference type="EMDB" id="EMD-16908"/>
<dbReference type="EMDB" id="EMD-18382"/>
<dbReference type="EMDB" id="EMD-18539"/>
<dbReference type="EMDB" id="EMD-18765"/>
<dbReference type="EMDB" id="EMD-19330"/>
<dbReference type="EMDB" id="EMD-29252"/>
<dbReference type="EMDB" id="EMD-29253"/>
<dbReference type="EMDB" id="EMD-29254"/>
<dbReference type="EMDB" id="EMD-29255"/>
<dbReference type="EMDB" id="EMD-29256"/>
<dbReference type="EMDB" id="EMD-29257"/>
<dbReference type="EMDB" id="EMD-29258"/>
<dbReference type="EMDB" id="EMD-29259"/>
<dbReference type="EMDB" id="EMD-29260"/>
<dbReference type="EMDB" id="EMD-29261"/>
<dbReference type="EMDB" id="EMD-29262"/>
<dbReference type="EMDB" id="EMD-29265"/>
<dbReference type="EMDB" id="EMD-29266"/>
<dbReference type="EMDB" id="EMD-29267"/>
<dbReference type="EMDB" id="EMD-29268"/>
<dbReference type="EMDB" id="EMD-29269"/>
<dbReference type="EMDB" id="EMD-29271"/>
<dbReference type="EMDB" id="EMD-29272"/>
<dbReference type="EMDB" id="EMD-29273"/>
<dbReference type="EMDB" id="EMD-29274"/>
<dbReference type="EMDB" id="EMD-29275"/>
<dbReference type="EMDB" id="EMD-29276"/>
<dbReference type="EMDB" id="EMD-29277"/>
<dbReference type="EMDB" id="EMD-29757"/>
<dbReference type="EMDB" id="EMD-29758"/>
<dbReference type="EMDB" id="EMD-29759"/>
<dbReference type="EMDB" id="EMD-29760"/>
<dbReference type="EMDB" id="EMD-29771"/>
<dbReference type="EMDB" id="EMD-31465"/>
<dbReference type="EMDB" id="EMD-33329"/>
<dbReference type="EMDB" id="EMD-33330"/>
<dbReference type="EMDB" id="EMD-35370"/>
<dbReference type="EMDB" id="EMD-35371"/>
<dbReference type="EMDB" id="EMD-35375"/>
<dbReference type="EMDB" id="EMD-35413"/>
<dbReference type="EMDB" id="EMD-35414"/>
<dbReference type="EMDB" id="EMD-35596"/>
<dbReference type="EMDB" id="EMD-35597"/>
<dbReference type="EMDB" id="EMD-35599"/>
<dbReference type="EMDB" id="EMD-35639"/>
<dbReference type="EMDB" id="EMD-35649"/>
<dbReference type="EMDB" id="EMD-35651"/>
<dbReference type="EMDB" id="EMD-35672"/>
<dbReference type="EMDB" id="EMD-35673"/>
<dbReference type="EMDB" id="EMD-36178"/>
<dbReference type="EMDB" id="EMD-36179"/>
<dbReference type="EMDB" id="EMD-36180"/>
<dbReference type="EMDB" id="EMD-36181"/>
<dbReference type="EMDB" id="EMD-36838"/>
<dbReference type="EMDB" id="EMD-38629"/>
<dbReference type="EMDB" id="EMD-38630"/>
<dbReference type="EMDB" id="EMD-38631"/>
<dbReference type="EMDB" id="EMD-3883"/>
<dbReference type="EMDB" id="EMD-39455"/>
<dbReference type="EMDB" id="EMD-39456"/>
<dbReference type="EMDB" id="EMD-40205"/>
<dbReference type="EMDB" id="EMD-4070"/>
<dbReference type="EMDB" id="EMD-42351"/>
<dbReference type="EMDB" id="EMD-45170"/>
<dbReference type="EMDB" id="EMD-51132"/>
<dbReference type="EMDB" id="EMD-51452"/>
<dbReference type="EMDB" id="EMD-9701"/>
<dbReference type="EMDB" id="EMD-9702"/>
<dbReference type="EMDB" id="EMD-9703"/>
<dbReference type="SMR" id="P18621"/>
<dbReference type="BioGRID" id="112059">
    <property type="interactions" value="593"/>
</dbReference>
<dbReference type="BioGRID" id="1529331">
    <property type="interactions" value="13"/>
</dbReference>
<dbReference type="ComplexPortal" id="CPX-5183">
    <property type="entry name" value="60S cytosolic large ribosomal subunit"/>
</dbReference>
<dbReference type="ComplexPortal" id="CPX-7664">
    <property type="entry name" value="60S cytosolic large ribosomal subunit, testis-specific variant"/>
</dbReference>
<dbReference type="ComplexPortal" id="CPX-7665">
    <property type="entry name" value="60S cytosolic large ribosomal subunit, striated muscle variant"/>
</dbReference>
<dbReference type="CORUM" id="P18621"/>
<dbReference type="FunCoup" id="P18621">
    <property type="interactions" value="2442"/>
</dbReference>
<dbReference type="IntAct" id="P18621">
    <property type="interactions" value="364"/>
</dbReference>
<dbReference type="MINT" id="P18621"/>
<dbReference type="STRING" id="9606.ENSP00000463842"/>
<dbReference type="GlyGen" id="P18621">
    <property type="glycosylation" value="1 site, 1 O-linked glycan (1 site)"/>
</dbReference>
<dbReference type="iPTMnet" id="P18621"/>
<dbReference type="MetOSite" id="P18621"/>
<dbReference type="PhosphoSitePlus" id="P18621"/>
<dbReference type="SwissPalm" id="P18621"/>
<dbReference type="BioMuta" id="RPL17"/>
<dbReference type="DMDM" id="132799"/>
<dbReference type="jPOST" id="P18621"/>
<dbReference type="MassIVE" id="P18621"/>
<dbReference type="PaxDb" id="9606-ENSP00000397798"/>
<dbReference type="PeptideAtlas" id="P18621"/>
<dbReference type="ProteomicsDB" id="53603">
    <molecule id="P18621-1"/>
</dbReference>
<dbReference type="ProteomicsDB" id="5890"/>
<dbReference type="Pumba" id="P18621"/>
<dbReference type="TopDownProteomics" id="P18621-1">
    <molecule id="P18621-1"/>
</dbReference>
<dbReference type="TopDownProteomics" id="P18621-2">
    <molecule id="P18621-2"/>
</dbReference>
<dbReference type="Antibodypedia" id="65728">
    <property type="antibodies" value="312 antibodies from 29 providers"/>
</dbReference>
<dbReference type="DNASU" id="6139"/>
<dbReference type="Ensembl" id="ENST00000579248.5">
    <molecule id="P18621-1"/>
    <property type="protein sequence ID" value="ENSP00000462023.1"/>
    <property type="gene ID" value="ENSG00000265681.8"/>
</dbReference>
<dbReference type="Ensembl" id="ENST00000579408.5">
    <molecule id="P18621-1"/>
    <property type="protein sequence ID" value="ENSP00000463842.1"/>
    <property type="gene ID" value="ENSG00000265681.8"/>
</dbReference>
<dbReference type="Ensembl" id="ENST00000580261.6">
    <molecule id="P18621-1"/>
    <property type="protein sequence ID" value="ENSP00000462385.1"/>
    <property type="gene ID" value="ENSG00000265681.8"/>
</dbReference>
<dbReference type="Ensembl" id="ENST00000581373.5">
    <molecule id="P18621-2"/>
    <property type="protein sequence ID" value="ENSP00000462944.1"/>
    <property type="gene ID" value="ENSG00000265681.8"/>
</dbReference>
<dbReference type="Ensembl" id="ENST00000618613.5">
    <molecule id="P18621-1"/>
    <property type="protein sequence ID" value="ENSP00000480555.1"/>
    <property type="gene ID" value="ENSG00000265681.8"/>
</dbReference>
<dbReference type="Ensembl" id="ENST00000618619.4">
    <molecule id="P18621-1"/>
    <property type="protein sequence ID" value="ENSP00000482577.1"/>
    <property type="gene ID" value="ENSG00000265681.8"/>
</dbReference>
<dbReference type="GeneID" id="6139"/>
<dbReference type="KEGG" id="hsa:6139"/>
<dbReference type="MANE-Select" id="ENST00000580261.6">
    <property type="protein sequence ID" value="ENSP00000462385.1"/>
    <property type="RefSeq nucleotide sequence ID" value="NM_001035006.5"/>
    <property type="RefSeq protein sequence ID" value="NP_001030178.1"/>
</dbReference>
<dbReference type="UCSC" id="uc002ldp.4">
    <molecule id="P18621-1"/>
    <property type="organism name" value="human"/>
</dbReference>
<dbReference type="AGR" id="HGNC:10307"/>
<dbReference type="CTD" id="6139"/>
<dbReference type="DisGeNET" id="6139"/>
<dbReference type="GeneCards" id="RPL17"/>
<dbReference type="HGNC" id="HGNC:10307">
    <property type="gene designation" value="RPL17"/>
</dbReference>
<dbReference type="HPA" id="ENSG00000265681">
    <property type="expression patterns" value="Low tissue specificity"/>
</dbReference>
<dbReference type="MIM" id="603661">
    <property type="type" value="gene"/>
</dbReference>
<dbReference type="neXtProt" id="NX_P18621"/>
<dbReference type="OpenTargets" id="ENSG00000265681"/>
<dbReference type="PharmGKB" id="PA34676"/>
<dbReference type="VEuPathDB" id="HostDB:ENSG00000265681"/>
<dbReference type="eggNOG" id="KOG3353">
    <property type="taxonomic scope" value="Eukaryota"/>
</dbReference>
<dbReference type="GeneTree" id="ENSGT00950000183010"/>
<dbReference type="InParanoid" id="P18621"/>
<dbReference type="OMA" id="NTYETAR"/>
<dbReference type="OrthoDB" id="9476743at2759"/>
<dbReference type="PAN-GO" id="P18621">
    <property type="GO annotations" value="3 GO annotations based on evolutionary models"/>
</dbReference>
<dbReference type="PhylomeDB" id="P18621"/>
<dbReference type="TreeFam" id="TF300042"/>
<dbReference type="PathwayCommons" id="P18621"/>
<dbReference type="Reactome" id="R-HSA-156827">
    <property type="pathway name" value="L13a-mediated translational silencing of Ceruloplasmin expression"/>
</dbReference>
<dbReference type="Reactome" id="R-HSA-156902">
    <property type="pathway name" value="Peptide chain elongation"/>
</dbReference>
<dbReference type="Reactome" id="R-HSA-1799339">
    <property type="pathway name" value="SRP-dependent cotranslational protein targeting to membrane"/>
</dbReference>
<dbReference type="Reactome" id="R-HSA-192823">
    <property type="pathway name" value="Viral mRNA Translation"/>
</dbReference>
<dbReference type="Reactome" id="R-HSA-2408557">
    <property type="pathway name" value="Selenocysteine synthesis"/>
</dbReference>
<dbReference type="Reactome" id="R-HSA-6791226">
    <property type="pathway name" value="Major pathway of rRNA processing in the nucleolus and cytosol"/>
</dbReference>
<dbReference type="Reactome" id="R-HSA-72689">
    <property type="pathway name" value="Formation of a pool of free 40S subunits"/>
</dbReference>
<dbReference type="Reactome" id="R-HSA-72706">
    <property type="pathway name" value="GTP hydrolysis and joining of the 60S ribosomal subunit"/>
</dbReference>
<dbReference type="Reactome" id="R-HSA-72764">
    <property type="pathway name" value="Eukaryotic Translation Termination"/>
</dbReference>
<dbReference type="Reactome" id="R-HSA-9010553">
    <property type="pathway name" value="Regulation of expression of SLITs and ROBOs"/>
</dbReference>
<dbReference type="Reactome" id="R-HSA-9633012">
    <property type="pathway name" value="Response of EIF2AK4 (GCN2) to amino acid deficiency"/>
</dbReference>
<dbReference type="Reactome" id="R-HSA-975956">
    <property type="pathway name" value="Nonsense Mediated Decay (NMD) independent of the Exon Junction Complex (EJC)"/>
</dbReference>
<dbReference type="Reactome" id="R-HSA-975957">
    <property type="pathway name" value="Nonsense Mediated Decay (NMD) enhanced by the Exon Junction Complex (EJC)"/>
</dbReference>
<dbReference type="SignaLink" id="P18621"/>
<dbReference type="SIGNOR" id="P18621"/>
<dbReference type="BioGRID-ORCS" id="6139">
    <property type="hits" value="787 hits in 1061 CRISPR screens"/>
</dbReference>
<dbReference type="CD-CODE" id="91857CE7">
    <property type="entry name" value="Nucleolus"/>
</dbReference>
<dbReference type="ChiTaRS" id="RPL17">
    <property type="organism name" value="human"/>
</dbReference>
<dbReference type="EvolutionaryTrace" id="P18621"/>
<dbReference type="GeneWiki" id="RPL17"/>
<dbReference type="GenomeRNAi" id="6139"/>
<dbReference type="Pharos" id="P18621">
    <property type="development level" value="Tbio"/>
</dbReference>
<dbReference type="PRO" id="PR:P18621"/>
<dbReference type="Proteomes" id="UP000005640">
    <property type="component" value="Chromosome 18"/>
</dbReference>
<dbReference type="RNAct" id="P18621">
    <property type="molecule type" value="protein"/>
</dbReference>
<dbReference type="Bgee" id="ENSG00000265681">
    <property type="expression patterns" value="Expressed in left ovary and 96 other cell types or tissues"/>
</dbReference>
<dbReference type="ExpressionAtlas" id="P18621">
    <property type="expression patterns" value="baseline and differential"/>
</dbReference>
<dbReference type="GO" id="GO:0005737">
    <property type="term" value="C:cytoplasm"/>
    <property type="evidence" value="ECO:0000303"/>
    <property type="project" value="ComplexPortal"/>
</dbReference>
<dbReference type="GO" id="GO:0005829">
    <property type="term" value="C:cytosol"/>
    <property type="evidence" value="ECO:0000304"/>
    <property type="project" value="Reactome"/>
</dbReference>
<dbReference type="GO" id="GO:0022625">
    <property type="term" value="C:cytosolic large ribosomal subunit"/>
    <property type="evidence" value="ECO:0000314"/>
    <property type="project" value="UniProtKB"/>
</dbReference>
<dbReference type="GO" id="GO:0022626">
    <property type="term" value="C:cytosolic ribosome"/>
    <property type="evidence" value="ECO:0000314"/>
    <property type="project" value="FlyBase"/>
</dbReference>
<dbReference type="GO" id="GO:0005634">
    <property type="term" value="C:nucleus"/>
    <property type="evidence" value="ECO:0007005"/>
    <property type="project" value="UniProtKB"/>
</dbReference>
<dbReference type="GO" id="GO:0003723">
    <property type="term" value="F:RNA binding"/>
    <property type="evidence" value="ECO:0007005"/>
    <property type="project" value="UniProtKB"/>
</dbReference>
<dbReference type="GO" id="GO:0003735">
    <property type="term" value="F:structural constituent of ribosome"/>
    <property type="evidence" value="ECO:0000314"/>
    <property type="project" value="UniProtKB"/>
</dbReference>
<dbReference type="GO" id="GO:0002181">
    <property type="term" value="P:cytoplasmic translation"/>
    <property type="evidence" value="ECO:0000318"/>
    <property type="project" value="GO_Central"/>
</dbReference>
<dbReference type="GO" id="GO:0006412">
    <property type="term" value="P:translation"/>
    <property type="evidence" value="ECO:0000303"/>
    <property type="project" value="UniProtKB"/>
</dbReference>
<dbReference type="CDD" id="cd00336">
    <property type="entry name" value="Ribosomal_L22"/>
    <property type="match status" value="1"/>
</dbReference>
<dbReference type="FunFam" id="3.90.470.10:FF:000003">
    <property type="entry name" value="60S ribosomal protein L17"/>
    <property type="match status" value="1"/>
</dbReference>
<dbReference type="Gene3D" id="3.90.470.10">
    <property type="entry name" value="Ribosomal protein L22/L17"/>
    <property type="match status" value="1"/>
</dbReference>
<dbReference type="HAMAP" id="MF_01331_A">
    <property type="entry name" value="Ribosomal_uL22_A"/>
    <property type="match status" value="1"/>
</dbReference>
<dbReference type="InterPro" id="IPR001063">
    <property type="entry name" value="Ribosomal_uL22"/>
</dbReference>
<dbReference type="InterPro" id="IPR018260">
    <property type="entry name" value="Ribosomal_uL22_CS"/>
</dbReference>
<dbReference type="InterPro" id="IPR005721">
    <property type="entry name" value="Ribosomal_uL22_euk/arc"/>
</dbReference>
<dbReference type="InterPro" id="IPR036394">
    <property type="entry name" value="Ribosomal_uL22_sf"/>
</dbReference>
<dbReference type="NCBIfam" id="NF003260">
    <property type="entry name" value="PRK04223.1"/>
    <property type="match status" value="1"/>
</dbReference>
<dbReference type="NCBIfam" id="TIGR01038">
    <property type="entry name" value="uL22_arch_euk"/>
    <property type="match status" value="1"/>
</dbReference>
<dbReference type="PANTHER" id="PTHR11593">
    <property type="entry name" value="60S RIBOSOMAL PROTEIN L17"/>
    <property type="match status" value="1"/>
</dbReference>
<dbReference type="PANTHER" id="PTHR11593:SF11">
    <property type="entry name" value="LARGE RIBOSOMAL SUBUNIT PROTEIN UL22"/>
    <property type="match status" value="1"/>
</dbReference>
<dbReference type="Pfam" id="PF00237">
    <property type="entry name" value="Ribosomal_L22"/>
    <property type="match status" value="1"/>
</dbReference>
<dbReference type="SUPFAM" id="SSF54843">
    <property type="entry name" value="Ribosomal protein L22"/>
    <property type="match status" value="1"/>
</dbReference>
<dbReference type="PROSITE" id="PS00464">
    <property type="entry name" value="RIBOSOMAL_L22"/>
    <property type="match status" value="1"/>
</dbReference>
<feature type="initiator methionine" description="Removed" evidence="2 6">
    <location>
        <position position="1"/>
    </location>
</feature>
<feature type="chain" id="PRO_0000125331" description="Large ribosomal subunit protein uL22">
    <location>
        <begin position="2"/>
        <end position="184"/>
    </location>
</feature>
<feature type="region of interest" description="Disordered" evidence="1">
    <location>
        <begin position="160"/>
        <end position="184"/>
    </location>
</feature>
<feature type="compositionally biased region" description="Basic residues" evidence="1">
    <location>
        <begin position="167"/>
        <end position="184"/>
    </location>
</feature>
<feature type="splice variant" id="VSP_045445" description="In isoform 2." evidence="7">
    <location>
        <begin position="1"/>
        <end position="38"/>
    </location>
</feature>
<feature type="splice variant" id="VSP_046965" description="In isoform 3." evidence="9">
    <original>ISQKKLKKQKLMARE</original>
    <variation>LRSSSLGKWCAFLVSSFQFCSGSTKNSWSHIYTLWFPPSLVVYGLRKQYKNPMIQTKAK</variation>
    <location>
        <begin position="170"/>
        <end position="184"/>
    </location>
</feature>
<feature type="sequence conflict" description="In Ref. 8; AAH66324." evidence="10" ref="8">
    <original>H</original>
    <variation>R</variation>
    <location>
        <position position="133"/>
    </location>
</feature>
<evidence type="ECO:0000256" key="1">
    <source>
        <dbReference type="SAM" id="MobiDB-lite"/>
    </source>
</evidence>
<evidence type="ECO:0000269" key="2">
    <source>
    </source>
</evidence>
<evidence type="ECO:0000269" key="3">
    <source>
    </source>
</evidence>
<evidence type="ECO:0000269" key="4">
    <source>
    </source>
</evidence>
<evidence type="ECO:0000269" key="5">
    <source>
    </source>
</evidence>
<evidence type="ECO:0000269" key="6">
    <source ref="10"/>
</evidence>
<evidence type="ECO:0000303" key="7">
    <source>
    </source>
</evidence>
<evidence type="ECO:0000303" key="8">
    <source>
    </source>
</evidence>
<evidence type="ECO:0000303" key="9">
    <source ref="5"/>
</evidence>
<evidence type="ECO:0000305" key="10"/>
<evidence type="ECO:0000305" key="11">
    <source>
    </source>
</evidence>
<evidence type="ECO:0007744" key="12">
    <source>
        <dbReference type="PDB" id="6LQM"/>
    </source>
</evidence>
<evidence type="ECO:0007744" key="13">
    <source>
        <dbReference type="PDB" id="6LSR"/>
    </source>
</evidence>
<evidence type="ECO:0007744" key="14">
    <source>
        <dbReference type="PDB" id="6LSS"/>
    </source>
</evidence>
<evidence type="ECO:0007744" key="15">
    <source>
        <dbReference type="PDB" id="6LU8"/>
    </source>
</evidence>
<keyword id="KW-0002">3D-structure</keyword>
<keyword id="KW-0025">Alternative splicing</keyword>
<keyword id="KW-0963">Cytoplasm</keyword>
<keyword id="KW-0903">Direct protein sequencing</keyword>
<keyword id="KW-1267">Proteomics identification</keyword>
<keyword id="KW-1185">Reference proteome</keyword>
<keyword id="KW-0687">Ribonucleoprotein</keyword>
<keyword id="KW-0689">Ribosomal protein</keyword>
<gene>
    <name type="primary">RPL17</name>
</gene>
<sequence length="184" mass="21397">MVRYSLDPENPTKSCKSRGSNLRVHFKNTRETAQAIKGMHIRKATKYLKDVTLQKQCVPFRRYNGGVGRCAQAKQWGWTQGRWPKKSAEFLLHMLKNAESNAELKGLDVDSLVIEHIQVNKAPKMRRRTYRAHGRINPYMSSPCHIEMILTEKEQIVPKPEEEVAQKKKISQKKLKKQKLMARE</sequence>
<comment type="function">
    <text evidence="4 5 11">Component of the large ribosomal subunit (PubMed:12962325, PubMed:23636399, PubMed:32669547). The ribosome is a large ribonucleoprotein complex responsible for the synthesis of proteins in the cell (PubMed:12962325, PubMed:23636399, PubMed:32669547).</text>
</comment>
<comment type="subunit">
    <text evidence="4 5 11">Component of the large ribosomal subunit (PubMed:12962325, PubMed:23636399, PubMed:32669547).</text>
</comment>
<comment type="subcellular location">
    <subcellularLocation>
        <location evidence="4">Cytoplasm</location>
    </subcellularLocation>
</comment>
<comment type="alternative products">
    <event type="alternative splicing"/>
    <isoform>
        <id>P18621-1</id>
        <name>1</name>
        <sequence type="displayed"/>
    </isoform>
    <isoform>
        <id>P18621-2</id>
        <name>2</name>
        <sequence type="described" ref="VSP_045445"/>
    </isoform>
    <isoform>
        <id>P18621-3</id>
        <name>3</name>
        <sequence type="described" ref="VSP_046965"/>
    </isoform>
</comment>
<comment type="tissue specificity">
    <text evidence="3">Expressed in pancreas, lung, colon, cystic duct, gall bladder, kidney and liver. Expressed at high levels in the well differentiated pancreatic tumor cell lines HPAF, COLO 357 and Capan-1, the moderately differentiated pancreatic tumor cell lines T3M-4, AsPc-1 and BxPc-3, the poorly differentiated pancreatic tumor cell line MIA PaCa-2, and the pancreatic tumor cell lines of undefined differentiation status such as SW979. Expressed at lower levels in the poorly differentiated pancreatic tumor cell lines HCG-25 and PANC-1.</text>
</comment>
<comment type="similarity">
    <text evidence="10">Belongs to the universal ribosomal protein uL22 family.</text>
</comment>
<accession>P18621</accession>
<accession>B2R4H3</accession>
<accession>B4E3C2</accession>
<accession>B5ME31</accession>
<accession>J3QL51</accession>
<accession>Q3KQW2</accession>
<accession>Q6NZ54</accession>
<accession>Q7M4M5</accession>
<name>RL17_HUMAN</name>
<organism>
    <name type="scientific">Homo sapiens</name>
    <name type="common">Human</name>
    <dbReference type="NCBI Taxonomy" id="9606"/>
    <lineage>
        <taxon>Eukaryota</taxon>
        <taxon>Metazoa</taxon>
        <taxon>Chordata</taxon>
        <taxon>Craniata</taxon>
        <taxon>Vertebrata</taxon>
        <taxon>Euteleostomi</taxon>
        <taxon>Mammalia</taxon>
        <taxon>Eutheria</taxon>
        <taxon>Euarchontoglires</taxon>
        <taxon>Primates</taxon>
        <taxon>Haplorrhini</taxon>
        <taxon>Catarrhini</taxon>
        <taxon>Hominidae</taxon>
        <taxon>Homo</taxon>
    </lineage>
</organism>
<proteinExistence type="evidence at protein level"/>